<comment type="function">
    <text evidence="5 6 9 13 14">Catalyzes the removal of unsubstituted N-terminal amino acids from various peptides (PubMed:11895433, PubMed:12746529). When associated as homohexamer, catalyzes the proteolyzes of Xaa-Leu dipeptides (PubMed:11895433, PubMed:12746529). Possesses leucine aminopeptidase activity against the model substrate leucine-amido methyl coumarin (PubMed:22493451). Presumably involved in the processing and regular turnover of intracellular proteins (Probable). Regulates wound signaling and has a role in insect defense (Probable).</text>
</comment>
<comment type="function">
    <text evidence="9">Functions as a molecular chaperone to protect proteins from heat-induced damage.</text>
</comment>
<comment type="catalytic activity">
    <reaction evidence="5 6">
        <text>Release of an N-terminal amino acid, Xaa-|-Yaa-, in which Xaa is preferably Leu, but may be other amino acids including Pro although not Arg or Lys, and Yaa may be Pro. Amino acid amides and methyl esters are also readily hydrolyzed, but rates on arylamides are exceedingly low.</text>
        <dbReference type="EC" id="3.4.11.1"/>
    </reaction>
</comment>
<comment type="catalytic activity">
    <reaction evidence="1">
        <text>Release of N-terminal proline from a peptide.</text>
        <dbReference type="EC" id="3.4.11.5"/>
    </reaction>
</comment>
<comment type="cofactor">
    <cofactor evidence="10">
        <name>Mg(2+)</name>
        <dbReference type="ChEBI" id="CHEBI:18420"/>
    </cofactor>
    <text evidence="10">Binds 2 Mg(2+) ions per subunit.</text>
</comment>
<comment type="biophysicochemical properties">
    <kinetics>
        <KM evidence="5">1.8 mM for Leu-Gly</KM>
        <Vmax evidence="5">419.3 umol/min/mg enzyme with Leu-Leu as substrate</Vmax>
        <Vmax evidence="5">440.9 umol/min/mg enzyme with Leu-Phe as substrate</Vmax>
        <Vmax evidence="5">325.4 umol/min/mg enzyme with Leu-Met as substrate</Vmax>
        <Vmax evidence="5">150.4 umol/min/mg enzyme with Leu-Ser as substrate</Vmax>
        <Vmax evidence="5">460.0 umol/min/mg enzyme with Leu-Gly as substrate</Vmax>
        <Vmax evidence="5">200.8 umol/min/mg enzyme with Leu-Tyr as substrate</Vmax>
        <Vmax evidence="5">141.6 umol/min/mg enzyme with Leu-Asn as substrate</Vmax>
        <Vmax evidence="5">9.8 umol/min/mg enzyme with Leu-Asp as substrate</Vmax>
        <Vmax evidence="5">112.3 umol/min/mg enzyme with Leu-Arg as substrate</Vmax>
        <Vmax evidence="5">320.6 umol/min/mg enzyme with Ala-Leu as substrate</Vmax>
        <Vmax evidence="5">281.6 umol/min/mg enzyme with Val-Leu as substrate</Vmax>
        <Vmax evidence="5">131.3 umol/min/mg enzyme with Phe-Leu as substrate</Vmax>
        <Vmax evidence="5">214.3 umol/min/mg enzyme with Trp-Leu as substrate</Vmax>
        <Vmax evidence="5">153.4 umol/min/mg enzyme with Pro-Leu as substrate</Vmax>
        <Vmax evidence="5">345.3 umol/min/mg enzyme with Met-Leu as substrate</Vmax>
        <Vmax evidence="5">261.3 umol/min/mg enzyme with Thr-Leu as substrate</Vmax>
        <Vmax evidence="5">45.7 umol/min/mg enzyme with Tyr-Leu as substrate</Vmax>
        <Vmax evidence="5">150.9 umol/min/mg enzyme with His-Leu as substrate</Vmax>
        <Vmax evidence="6">24.52 umol/min/mg enzyme with Leu-acyl-beta-naphthylamide as substrate</Vmax>
        <Vmax evidence="6">14.72 umol/min/mg enzyme with Met-acyl-beta-naphthylamide as substrate</Vmax>
        <Vmax evidence="6">8.01 umol/min/mg enzyme with Arg-acyl-beta-naphthylamide as substrate</Vmax>
        <Vmax evidence="6">5.88 umol/min/mg enzyme with Ile-acyl-beta-naphthylamide as substrate</Vmax>
        <Vmax evidence="6">3.43 umol/min/mg enzyme with Val-acyl-beta-naphthylamide as substrate</Vmax>
        <Vmax evidence="6">0.71 umol/min/mg enzyme with Ser-acyl-beta-naphthylamide as substrate</Vmax>
        <Vmax evidence="6">0.27 umol/min/mg enzyme with Phe-acyl-beta-naphthylamide as substrate</Vmax>
        <Vmax evidence="6">0.2 umol/min/mg enzyme with Gly-acyl-beta-naphthylamide as substrate</Vmax>
        <Vmax evidence="6">0.11 umol/min/mg enzyme with Pro-acyl-beta-naphthylamide as substrate</Vmax>
        <text evidence="5">kcat is 120 sec(-1) with Leu-Gly as substrate.</text>
    </kinetics>
    <phDependence>
        <text evidence="5">Optimum pH is 9.2.</text>
    </phDependence>
</comment>
<comment type="subunit">
    <text evidence="5 9 10">Homohexamer (dimer of homotrimers).</text>
</comment>
<comment type="subcellular location">
    <subcellularLocation>
        <location evidence="8">Plastid</location>
        <location evidence="8">Chloroplast</location>
    </subcellularLocation>
</comment>
<comment type="tissue specificity">
    <text evidence="4 6 8">Observed during floral development (PubMed:11204785). Expressed in healthy and senescent leaves, cotyledons (emergence from seed coats), pistils, sepals, petals, stamens, and floral buds (at protein level) (PubMed:12746529). Present at very low levels in healthy leaves (PubMed:12746529, PubMed:17896114).</text>
</comment>
<comment type="developmental stage">
    <text evidence="6">Expressed in cotyledons during seedlings development four days after emergence from seed coats (at protein level).</text>
</comment>
<comment type="induction">
    <text evidence="3 4 6 7 8 11">Induced in leaves by wounding, mainly in mesophyll cells chloroplasts, and, to a lower extent, in epidermal and vasculature cells (at protein level) (PubMed:10787049, PubMed:11204785, PubMed:12746529, PubMed:15231736, PubMed:17896114, PubMed:8234334). Activated by the wound signal molecule methyl jasmonate (meJA) (at protein level) (PubMed:15231736, PubMed:17896114). Accumulates during infection by the pathogenic bacterium P.syringae pv. tomato in a coronatine-dependent manner; coronatine produced by P.syringae mimics wounding without triggering defense responses (PubMed:10787049, PubMed:11204785). Triggered by insect infestation (e.g. larvae of M.sexta) (PubMed:11204785).</text>
</comment>
<comment type="disruption phenotype">
    <text evidence="4">No visible phenotype on plants, flowers and fruits development, as well as normal defense responses to P.syringae pv. tomato and no impact on insect growth (e.g. larvae of M.sexta).</text>
</comment>
<comment type="similarity">
    <text evidence="13">Belongs to the peptidase M17 family.</text>
</comment>
<gene>
    <name evidence="12" type="primary">LAPA1</name>
    <name type="synonym">LAP</name>
    <name type="synonym">LAP2</name>
    <name evidence="13" type="ordered locus">Solyc12g010020</name>
</gene>
<sequence>MATLRVSSLFASSSSSLHSNPSVFTKYQSSPKWAFSFPVTPLCSKRSKRIVHCIAGDTLGLTRPNESDAPKISIGAKDTAVVQWQGDLLAIGATENDMARDENSKFKNPLLQQLDSELNGLLSAASSEEDFSGKSGQSVNLRFPGGRITLVGLGSSASSPTSYHSLGQAAAAAAKSSQARNIAVALASTDGLSAESKINSASAIATGVVLGSFEDNRFRSESKKSTLESLDILGLGTGPEIERKIKYAEHVCAGVILGRELVNAPANIVTPAVLAEEAKKIASTYSDVISVNILDAEQCKELKMGAYLAVAAAATENPPYFIHLCFKTPTKERKTKLALVGKGLTFDSGGYNLKVGAGSRIELMKNDMGGAAAVLGAAKALGEIRPSRVEVHFIVAACENMISAEGMRPGDIVTASNGKTIEVNNTDAEGRLTLADALIYACNQGVEKIIDLATLTGAIMVALGPSVAGAFTPNDDLAREVVEAAEASGEKLWRMPMEESYWESMKSGVADMINTGPGNGGAITGALFLKQFVDEKVQWLHLDVAGPVWSDEKKNATGYGVSTLVEWVLRN</sequence>
<organism>
    <name type="scientific">Solanum lycopersicum</name>
    <name type="common">Tomato</name>
    <name type="synonym">Lycopersicon esculentum</name>
    <dbReference type="NCBI Taxonomy" id="4081"/>
    <lineage>
        <taxon>Eukaryota</taxon>
        <taxon>Viridiplantae</taxon>
        <taxon>Streptophyta</taxon>
        <taxon>Embryophyta</taxon>
        <taxon>Tracheophyta</taxon>
        <taxon>Spermatophyta</taxon>
        <taxon>Magnoliopsida</taxon>
        <taxon>eudicotyledons</taxon>
        <taxon>Gunneridae</taxon>
        <taxon>Pentapetalae</taxon>
        <taxon>asterids</taxon>
        <taxon>lamiids</taxon>
        <taxon>Solanales</taxon>
        <taxon>Solanaceae</taxon>
        <taxon>Solanoideae</taxon>
        <taxon>Solaneae</taxon>
        <taxon>Solanum</taxon>
        <taxon>Solanum subgen. Lycopersicon</taxon>
    </lineage>
</organism>
<reference key="1">
    <citation type="journal article" date="1996" name="J. Biol. Chem.">
        <title>Localization and post-translational processing of the wound-induced leucine aminopeptidase proteins of tomato.</title>
        <authorList>
            <person name="Gu Y.Q."/>
            <person name="Chao W.S."/>
            <person name="Walling L.L."/>
        </authorList>
    </citation>
    <scope>NUCLEOTIDE SEQUENCE [MRNA]</scope>
    <source>
        <strain>cv. Peto 238R</strain>
        <tissue>Leaf</tissue>
    </source>
</reference>
<reference key="2">
    <citation type="journal article" date="2012" name="Nature">
        <title>The tomato genome sequence provides insights into fleshy fruit evolution.</title>
        <authorList>
            <consortium name="Tomato Genome Consortium"/>
        </authorList>
    </citation>
    <scope>NUCLEOTIDE SEQUENCE [LARGE SCALE GENOMIC DNA]</scope>
    <source>
        <strain>cv. Heinz 1706</strain>
    </source>
</reference>
<reference key="3">
    <citation type="journal article" date="1995" name="Plant Mol. Biol.">
        <title>Nature and regulation of pistil-expressed genes in tomato.</title>
        <authorList>
            <person name="Milligan S.B."/>
            <person name="Gasser C.S."/>
        </authorList>
    </citation>
    <scope>NUCLEOTIDE SEQUENCE [MRNA] OF 49-571</scope>
    <source>
        <strain>cv. VF36</strain>
        <tissue>Pistil</tissue>
    </source>
</reference>
<reference key="4">
    <citation type="journal article" date="1993" name="Proc. Natl. Acad. Sci. U.S.A.">
        <title>Leucine aminopeptidase: an inducible component of the defense response in Lycopersicon esculentum (tomato).</title>
        <authorList>
            <person name="Pautot V."/>
            <person name="Holzer F.M."/>
            <person name="Reisch B."/>
            <person name="Walling L.L."/>
        </authorList>
    </citation>
    <scope>NUCLEOTIDE SEQUENCE [MRNA] OF 103-571</scope>
    <scope>INDUCTION</scope>
    <source>
        <strain>cv. Peto 238R</strain>
        <tissue>Leaf</tissue>
    </source>
</reference>
<reference key="5">
    <citation type="journal article" date="2000" name="Planta">
        <title>Leucine aminopeptidases: the ubiquity of LAP-N and the specificity of LAP-A.</title>
        <authorList>
            <person name="Chao W.S."/>
            <person name="Pautot V."/>
            <person name="Holzer F.M."/>
            <person name="Walling L.L."/>
        </authorList>
    </citation>
    <scope>INDUCTION BY WOUNDING AND PSEUDOMONAS SYRINGAE</scope>
    <scope>GENE FAMILY</scope>
    <scope>NOMENCLATURE</scope>
    <source>
        <strain>cv. Peto 238R</strain>
        <strain>cv. VFNT Cherry</strain>
    </source>
</reference>
<reference key="6">
    <citation type="journal article" date="2001" name="Mol. Plant Microbe Interact.">
        <title>The induction of tomato leucine aminopeptidase genes (LapA) after Pseudomonas syringae pv. tomato infection is primarily a wound response triggered by coronatine.</title>
        <authorList>
            <person name="Pautot V."/>
            <person name="Holzer F.M."/>
            <person name="Chaufaux J."/>
            <person name="Walling L.L."/>
        </authorList>
    </citation>
    <scope>FUNCTION</scope>
    <scope>DISRUPTION PHENOTYPE</scope>
    <scope>TISSUE SPECIFICITY</scope>
    <scope>INDUCTION BY INSECT; WOUNDING AND PSEUDOMONAS SYRINGAE</scope>
    <source>
        <strain>cv. UC82B</strain>
    </source>
</reference>
<reference key="7">
    <citation type="journal article" date="2002" name="Eur. J. Biochem.">
        <title>Identification of residues critical for activity of the wound-induced leucine aminopeptidase (LAP-A) of tomato.</title>
        <authorList>
            <person name="Gu Y.Q."/>
            <person name="Walling L.L."/>
        </authorList>
    </citation>
    <scope>FUNCTION</scope>
    <scope>CATALYTIC ACTIVITY</scope>
    <scope>BIOPHYSICOCHEMICAL PROPERTIES</scope>
    <scope>MUTAGENESIS OF ASP-347; LYS-354; GLU-429 AND ARG-431</scope>
    <scope>SUBUNIT</scope>
</reference>
<reference key="8">
    <citation type="journal article" date="2003" name="Plant Physiol.">
        <title>Isolation and characterization of the neutral leucine aminopeptidase (LapN) of tomato.</title>
        <authorList>
            <person name="Tu C.-J."/>
            <person name="Park S.-Y."/>
            <person name="Walling L.L."/>
        </authorList>
    </citation>
    <scope>FUNCTION</scope>
    <scope>CATALYTIC ACTIVITY</scope>
    <scope>BIOPHYSICOCHEMICAL PROPERTIES</scope>
    <scope>TISSUE SPECIFICITY</scope>
    <scope>DEVELOPMENTAL STAGE</scope>
    <scope>INDUCTION BY WOUNDING</scope>
    <source>
        <strain>cv. Peto 238R</strain>
        <strain>cv. VFNT Cherry</strain>
    </source>
</reference>
<reference key="9">
    <citation type="journal article" date="2004" name="Genes Dev.">
        <title>Conserved MYC transcription factors play a key role in jasmonate signaling both in tomato and Arabidopsis.</title>
        <authorList>
            <person name="Boter M."/>
            <person name="Ruiz-Rivero O."/>
            <person name="Abdeen A."/>
            <person name="Prat S."/>
        </authorList>
    </citation>
    <scope>INDUCTION</scope>
</reference>
<reference key="10">
    <citation type="journal article" date="2008" name="Planta">
        <title>Targeting and localization of wound-inducible leucine aminopeptidase A in tomato leaves.</title>
        <authorList>
            <person name="Narvaez-Vasquez J."/>
            <person name="Tu C.-J."/>
            <person name="Park S.-Y."/>
            <person name="Walling L.L."/>
        </authorList>
    </citation>
    <scope>SUBCELLULAR LOCATION</scope>
    <scope>TISSUE SPECIFICITY</scope>
    <scope>INDUCTION BY WOUNDING AND JASMONATE</scope>
    <source>
        <strain>cv. UC82B</strain>
    </source>
</reference>
<reference key="11">
    <citation type="journal article" date="2012" name="J. Biol. Chem.">
        <title>Plant leucine aminopeptidases moonlight as molecular chaperones to alleviate stress-induced damage.</title>
        <authorList>
            <person name="Scranton M.A."/>
            <person name="Yee A."/>
            <person name="Park S.-Y."/>
            <person name="Walling L.L."/>
        </authorList>
    </citation>
    <scope>FUNCTION</scope>
    <scope>MUTAGENESIS OF ASP-347; LYS-354; GLU-429 AND ARG-431</scope>
    <scope>SUBUNIT</scope>
</reference>
<reference key="12">
    <citation type="journal article" date="2014" name="Acta Crystallogr. D">
        <title>Structure of tomato wound-induced leucine aminopeptidase sheds light on substrate specificity.</title>
        <authorList>
            <person name="Duprez K."/>
            <person name="Scranton M.A."/>
            <person name="Walling L.L."/>
            <person name="Fan L."/>
        </authorList>
    </citation>
    <scope>X-RAY CRYSTALLOGRAPHY (2.20 ANGSTROMS) OF 54-571 IN COMPLEX WITH MAGNESIUM IONS</scope>
    <scope>SUBUNIT</scope>
</reference>
<proteinExistence type="evidence at protein level"/>
<accession>Q10712</accession>
<accession>A0A3Q7JSH2</accession>
<accession>Q9S9A3</accession>
<name>AMPL1_SOLLC</name>
<keyword id="KW-0002">3D-structure</keyword>
<keyword id="KW-0031">Aminopeptidase</keyword>
<keyword id="KW-0143">Chaperone</keyword>
<keyword id="KW-0150">Chloroplast</keyword>
<keyword id="KW-0378">Hydrolase</keyword>
<keyword id="KW-0460">Magnesium</keyword>
<keyword id="KW-0479">Metal-binding</keyword>
<keyword id="KW-0934">Plastid</keyword>
<keyword id="KW-0645">Protease</keyword>
<keyword id="KW-1185">Reference proteome</keyword>
<keyword id="KW-0346">Stress response</keyword>
<keyword id="KW-0809">Transit peptide</keyword>
<dbReference type="EC" id="3.4.11.1" evidence="5 6"/>
<dbReference type="EC" id="3.4.11.5" evidence="1"/>
<dbReference type="EMBL" id="U50151">
    <property type="protein sequence ID" value="AAC49456.1"/>
    <property type="molecule type" value="mRNA"/>
</dbReference>
<dbReference type="EMBL" id="U50152">
    <property type="protein sequence ID" value="AAC49457.1"/>
    <property type="molecule type" value="mRNA"/>
</dbReference>
<dbReference type="EMBL" id="CM001075">
    <property type="status" value="NOT_ANNOTATED_CDS"/>
    <property type="molecule type" value="Genomic_DNA"/>
</dbReference>
<dbReference type="EMBL" id="U20593">
    <property type="protein sequence ID" value="AAA80498.1"/>
    <property type="molecule type" value="mRNA"/>
</dbReference>
<dbReference type="PIR" id="S57811">
    <property type="entry name" value="S57811"/>
</dbReference>
<dbReference type="PIR" id="T07849">
    <property type="entry name" value="T07849"/>
</dbReference>
<dbReference type="PIR" id="T07850">
    <property type="entry name" value="T07850"/>
</dbReference>
<dbReference type="RefSeq" id="NP_001233862.2">
    <property type="nucleotide sequence ID" value="NM_001246933.2"/>
</dbReference>
<dbReference type="PDB" id="4KSI">
    <property type="method" value="X-ray"/>
    <property type="resolution" value="2.20 A"/>
    <property type="chains" value="A=54-571"/>
</dbReference>
<dbReference type="PDB" id="5D8N">
    <property type="method" value="X-ray"/>
    <property type="resolution" value="2.15 A"/>
    <property type="chains" value="A/B/C=54-571"/>
</dbReference>
<dbReference type="PDBsum" id="4KSI"/>
<dbReference type="PDBsum" id="5D8N"/>
<dbReference type="SMR" id="Q10712"/>
<dbReference type="FunCoup" id="Q10712">
    <property type="interactions" value="2130"/>
</dbReference>
<dbReference type="STRING" id="4081.Q10712"/>
<dbReference type="MEROPS" id="M17.002"/>
<dbReference type="PaxDb" id="4081-Solyc12g010020.1.1"/>
<dbReference type="GeneID" id="544017"/>
<dbReference type="KEGG" id="sly:544017"/>
<dbReference type="eggNOG" id="KOG2597">
    <property type="taxonomic scope" value="Eukaryota"/>
</dbReference>
<dbReference type="InParanoid" id="Q10712"/>
<dbReference type="OrthoDB" id="412814at2759"/>
<dbReference type="BRENDA" id="3.4.11.1">
    <property type="organism ID" value="3101"/>
</dbReference>
<dbReference type="SABIO-RK" id="Q10712"/>
<dbReference type="EvolutionaryTrace" id="Q10712"/>
<dbReference type="Proteomes" id="UP000004994">
    <property type="component" value="Unplaced"/>
</dbReference>
<dbReference type="ExpressionAtlas" id="Q10712">
    <property type="expression patterns" value="baseline and differential"/>
</dbReference>
<dbReference type="GO" id="GO:0009507">
    <property type="term" value="C:chloroplast"/>
    <property type="evidence" value="ECO:0000314"/>
    <property type="project" value="UniProtKB"/>
</dbReference>
<dbReference type="GO" id="GO:0005737">
    <property type="term" value="C:cytoplasm"/>
    <property type="evidence" value="ECO:0000318"/>
    <property type="project" value="GO_Central"/>
</dbReference>
<dbReference type="GO" id="GO:0004177">
    <property type="term" value="F:aminopeptidase activity"/>
    <property type="evidence" value="ECO:0000314"/>
    <property type="project" value="UniProtKB"/>
</dbReference>
<dbReference type="GO" id="GO:0042802">
    <property type="term" value="F:identical protein binding"/>
    <property type="evidence" value="ECO:0000314"/>
    <property type="project" value="UniProtKB"/>
</dbReference>
<dbReference type="GO" id="GO:0000287">
    <property type="term" value="F:magnesium ion binding"/>
    <property type="evidence" value="ECO:0000314"/>
    <property type="project" value="UniProtKB"/>
</dbReference>
<dbReference type="GO" id="GO:0030145">
    <property type="term" value="F:manganese ion binding"/>
    <property type="evidence" value="ECO:0007669"/>
    <property type="project" value="InterPro"/>
</dbReference>
<dbReference type="GO" id="GO:0070006">
    <property type="term" value="F:metalloaminopeptidase activity"/>
    <property type="evidence" value="ECO:0007669"/>
    <property type="project" value="InterPro"/>
</dbReference>
<dbReference type="GO" id="GO:0008233">
    <property type="term" value="F:peptidase activity"/>
    <property type="evidence" value="ECO:0000318"/>
    <property type="project" value="GO_Central"/>
</dbReference>
<dbReference type="GO" id="GO:0044183">
    <property type="term" value="F:protein folding chaperone"/>
    <property type="evidence" value="ECO:0000314"/>
    <property type="project" value="UniProtKB"/>
</dbReference>
<dbReference type="GO" id="GO:0034605">
    <property type="term" value="P:cellular response to heat"/>
    <property type="evidence" value="ECO:0000314"/>
    <property type="project" value="UniProtKB"/>
</dbReference>
<dbReference type="GO" id="GO:0043171">
    <property type="term" value="P:peptide catabolic process"/>
    <property type="evidence" value="ECO:0000314"/>
    <property type="project" value="UniProtKB"/>
</dbReference>
<dbReference type="GO" id="GO:0034214">
    <property type="term" value="P:protein hexamerization"/>
    <property type="evidence" value="ECO:0000314"/>
    <property type="project" value="UniProtKB"/>
</dbReference>
<dbReference type="GO" id="GO:0006508">
    <property type="term" value="P:proteolysis"/>
    <property type="evidence" value="ECO:0000315"/>
    <property type="project" value="UniProtKB"/>
</dbReference>
<dbReference type="GO" id="GO:0009617">
    <property type="term" value="P:response to bacterium"/>
    <property type="evidence" value="ECO:0000270"/>
    <property type="project" value="UniProtKB"/>
</dbReference>
<dbReference type="GO" id="GO:0009625">
    <property type="term" value="P:response to insect"/>
    <property type="evidence" value="ECO:0000270"/>
    <property type="project" value="UniProtKB"/>
</dbReference>
<dbReference type="GO" id="GO:0009753">
    <property type="term" value="P:response to jasmonic acid"/>
    <property type="evidence" value="ECO:0000270"/>
    <property type="project" value="UniProtKB"/>
</dbReference>
<dbReference type="GO" id="GO:0009611">
    <property type="term" value="P:response to wounding"/>
    <property type="evidence" value="ECO:0000270"/>
    <property type="project" value="UniProtKB"/>
</dbReference>
<dbReference type="CDD" id="cd00433">
    <property type="entry name" value="Peptidase_M17"/>
    <property type="match status" value="1"/>
</dbReference>
<dbReference type="FunFam" id="3.40.630.10:FF:000033">
    <property type="entry name" value="M17 leucyl aminopeptidase"/>
    <property type="match status" value="1"/>
</dbReference>
<dbReference type="Gene3D" id="3.40.220.10">
    <property type="entry name" value="Leucine Aminopeptidase, subunit E, domain 1"/>
    <property type="match status" value="1"/>
</dbReference>
<dbReference type="Gene3D" id="3.40.630.10">
    <property type="entry name" value="Zn peptidases"/>
    <property type="match status" value="1"/>
</dbReference>
<dbReference type="HAMAP" id="MF_00181">
    <property type="entry name" value="Cytosol_peptidase_M17"/>
    <property type="match status" value="1"/>
</dbReference>
<dbReference type="InterPro" id="IPR011356">
    <property type="entry name" value="Leucine_aapep/pepB"/>
</dbReference>
<dbReference type="InterPro" id="IPR043472">
    <property type="entry name" value="Macro_dom-like"/>
</dbReference>
<dbReference type="InterPro" id="IPR000819">
    <property type="entry name" value="Peptidase_M17_C"/>
</dbReference>
<dbReference type="InterPro" id="IPR023042">
    <property type="entry name" value="Peptidase_M17_leu_NH2_pept"/>
</dbReference>
<dbReference type="InterPro" id="IPR008283">
    <property type="entry name" value="Peptidase_M17_N"/>
</dbReference>
<dbReference type="NCBIfam" id="NF002076">
    <property type="entry name" value="PRK00913.2-3"/>
    <property type="match status" value="1"/>
</dbReference>
<dbReference type="PANTHER" id="PTHR11963:SF43">
    <property type="entry name" value="LEUCINE AMINOPEPTIDASE 1, CHLOROPLASTIC"/>
    <property type="match status" value="1"/>
</dbReference>
<dbReference type="PANTHER" id="PTHR11963">
    <property type="entry name" value="LEUCINE AMINOPEPTIDASE-RELATED"/>
    <property type="match status" value="1"/>
</dbReference>
<dbReference type="Pfam" id="PF00883">
    <property type="entry name" value="Peptidase_M17"/>
    <property type="match status" value="1"/>
</dbReference>
<dbReference type="Pfam" id="PF02789">
    <property type="entry name" value="Peptidase_M17_N"/>
    <property type="match status" value="1"/>
</dbReference>
<dbReference type="PRINTS" id="PR00481">
    <property type="entry name" value="LAMNOPPTDASE"/>
</dbReference>
<dbReference type="SUPFAM" id="SSF52949">
    <property type="entry name" value="Macro domain-like"/>
    <property type="match status" value="1"/>
</dbReference>
<dbReference type="SUPFAM" id="SSF53187">
    <property type="entry name" value="Zn-dependent exopeptidases"/>
    <property type="match status" value="1"/>
</dbReference>
<dbReference type="PROSITE" id="PS00631">
    <property type="entry name" value="CYTOSOL_AP"/>
    <property type="match status" value="1"/>
</dbReference>
<protein>
    <recommendedName>
        <fullName evidence="12">Leucine aminopeptidase A1, chloroplastic</fullName>
        <shortName evidence="12">LapA1</shortName>
        <ecNumber evidence="5 6">3.4.11.1</ecNumber>
    </recommendedName>
    <alternativeName>
        <fullName>DR57</fullName>
    </alternativeName>
    <alternativeName>
        <fullName>Leucyl aminopeptidase 1</fullName>
        <shortName>LAP 1</shortName>
    </alternativeName>
    <alternativeName>
        <fullName>Proline aminopeptidase 1</fullName>
        <ecNumber evidence="1">3.4.11.5</ecNumber>
    </alternativeName>
    <alternativeName>
        <fullName>Prolyl aminopeptidase 1</fullName>
    </alternativeName>
</protein>
<feature type="transit peptide" description="Chloroplast" evidence="2">
    <location>
        <begin position="1"/>
        <end position="53"/>
    </location>
</feature>
<feature type="chain" id="PRO_0000026803" description="Leucine aminopeptidase A1, chloroplastic">
    <location>
        <begin position="54"/>
        <end position="571"/>
    </location>
</feature>
<feature type="active site" evidence="2">
    <location>
        <position position="354"/>
    </location>
</feature>
<feature type="active site" evidence="2">
    <location>
        <position position="431"/>
    </location>
</feature>
<feature type="binding site" evidence="10 15">
    <location>
        <position position="342"/>
    </location>
    <ligand>
        <name>Mg(2+)</name>
        <dbReference type="ChEBI" id="CHEBI:18420"/>
        <label>1</label>
    </ligand>
</feature>
<feature type="binding site" evidence="10 15">
    <location>
        <position position="347"/>
    </location>
    <ligand>
        <name>Mg(2+)</name>
        <dbReference type="ChEBI" id="CHEBI:18420"/>
        <label>1</label>
    </ligand>
</feature>
<feature type="binding site" evidence="10 15">
    <location>
        <position position="347"/>
    </location>
    <ligand>
        <name>Mg(2+)</name>
        <dbReference type="ChEBI" id="CHEBI:18420"/>
        <label>2</label>
    </ligand>
</feature>
<feature type="binding site" evidence="10 15">
    <location>
        <position position="367"/>
    </location>
    <ligand>
        <name>Mg(2+)</name>
        <dbReference type="ChEBI" id="CHEBI:18420"/>
        <label>1</label>
    </ligand>
</feature>
<feature type="binding site" evidence="10 15">
    <location>
        <position position="427"/>
    </location>
    <ligand>
        <name>Mg(2+)</name>
        <dbReference type="ChEBI" id="CHEBI:18420"/>
        <label>2</label>
    </ligand>
</feature>
<feature type="binding site" evidence="10 15">
    <location>
        <position position="429"/>
    </location>
    <ligand>
        <name>Mg(2+)</name>
        <dbReference type="ChEBI" id="CHEBI:18420"/>
        <label>1</label>
    </ligand>
</feature>
<feature type="binding site" evidence="10 15">
    <location>
        <position position="429"/>
    </location>
    <ligand>
        <name>Mg(2+)</name>
        <dbReference type="ChEBI" id="CHEBI:18420"/>
        <label>2</label>
    </ligand>
</feature>
<feature type="mutagenesis site" description="Reduced stability." evidence="5">
    <original>D</original>
    <variation>A</variation>
    <location>
        <position position="347"/>
    </location>
</feature>
<feature type="mutagenesis site" description="Abolished activity." evidence="5">
    <original>D</original>
    <variation>E</variation>
    <variation>G</variation>
    <location>
        <position position="347"/>
    </location>
</feature>
<feature type="mutagenesis site" description="Lost ability to form homohexamers leading to impaired activity toward Leu-Leu as substrate." evidence="5">
    <original>D</original>
    <variation>I</variation>
    <variation>V</variation>
    <variation>S</variation>
    <location>
        <position position="347"/>
    </location>
</feature>
<feature type="mutagenesis site" description="Lost ability to form homohexamers leading to impaired activity toward Leu-Leu as substrate, but normal chaperone abilities." evidence="5 9">
    <original>D</original>
    <variation>N</variation>
    <location>
        <position position="347"/>
    </location>
</feature>
<feature type="mutagenesis site" description="Strongly reduced activity, but increased chaperone abilities." evidence="5 9">
    <original>D</original>
    <variation>R</variation>
    <location>
        <position position="347"/>
    </location>
</feature>
<feature type="mutagenesis site" description="Reduced stability." evidence="5">
    <original>D</original>
    <variation>Y</variation>
    <location>
        <position position="347"/>
    </location>
</feature>
<feature type="mutagenesis site" description="Lost ability to form homohexamers leading to impaired activity toward Leu-Leu as substrate, but increased chaperone abilities." evidence="5 9">
    <original>K</original>
    <variation>E</variation>
    <location>
        <position position="354"/>
    </location>
</feature>
<feature type="mutagenesis site" description="Reduced stability." evidence="5">
    <original>K</original>
    <variation>G</variation>
    <variation>W</variation>
    <variation>N</variation>
    <location>
        <position position="354"/>
    </location>
</feature>
<feature type="mutagenesis site" description="Strongly reduced activity." evidence="5">
    <original>K</original>
    <variation>M</variation>
    <location>
        <position position="354"/>
    </location>
</feature>
<feature type="mutagenesis site" description="Strongly reduced activity but normal chaperone abilities." evidence="5 9">
    <original>K</original>
    <variation>R</variation>
    <location>
        <position position="354"/>
    </location>
</feature>
<feature type="mutagenesis site" description="Reduced stability." evidence="5">
    <original>K</original>
    <variation>T</variation>
    <location>
        <position position="354"/>
    </location>
</feature>
<feature type="mutagenesis site" description="Lost ability to form homohexamers leading to impaired activity toward Leu-Leu as substrate." evidence="5">
    <original>E</original>
    <variation>A</variation>
    <variation>G</variation>
    <variation>Q</variation>
    <location>
        <position position="429"/>
    </location>
</feature>
<feature type="mutagenesis site" description="Almost normal activity." evidence="5">
    <original>E</original>
    <variation>D</variation>
    <location>
        <position position="429"/>
    </location>
</feature>
<feature type="mutagenesis site" description="Lost ability to form homohexamers leading to impaired activity toward Leu-Leu as substrate, but increased chaperone abilities." evidence="5 9">
    <original>E</original>
    <variation>R</variation>
    <location>
        <position position="429"/>
    </location>
</feature>
<feature type="mutagenesis site" description="Strongly reduced activity." evidence="5">
    <original>E</original>
    <variation>S</variation>
    <location>
        <position position="429"/>
    </location>
</feature>
<feature type="mutagenesis site" description="Strongly reduced activity but normal chaperone abilities." evidence="5 9">
    <original>E</original>
    <variation>V</variation>
    <location>
        <position position="429"/>
    </location>
</feature>
<feature type="mutagenesis site" description="Abolished activity." evidence="5">
    <original>E</original>
    <variation>W</variation>
    <location>
        <position position="429"/>
    </location>
</feature>
<feature type="mutagenesis site" description="Abolished activity but normal chaperone abilities." evidence="5 9">
    <original>R</original>
    <variation>A</variation>
    <location>
        <position position="431"/>
    </location>
</feature>
<feature type="mutagenesis site" description="Reduced stability." evidence="5">
    <original>R</original>
    <variation>E</variation>
    <location>
        <position position="431"/>
    </location>
</feature>
<feature type="mutagenesis site" description="Lost ability to form homohexamers leading to impaired activity toward Leu-Leu as substrate." evidence="5">
    <original>R</original>
    <variation>G</variation>
    <location>
        <position position="431"/>
    </location>
</feature>
<feature type="mutagenesis site" description="Strongly reduced activity." evidence="5">
    <original>R</original>
    <variation>K</variation>
    <location>
        <position position="431"/>
    </location>
</feature>
<feature type="mutagenesis site" description="Abolished activity." evidence="5">
    <original>R</original>
    <variation>V</variation>
    <variation>W</variation>
    <variation>Q</variation>
    <location>
        <position position="431"/>
    </location>
</feature>
<feature type="sequence conflict" description="In Ref. 3; AAA80498." evidence="13" ref="3">
    <original>P</original>
    <variation>N</variation>
    <location>
        <position position="271"/>
    </location>
</feature>
<feature type="sequence conflict" description="In Ref. 3; AAA80498." evidence="13" ref="3">
    <original>T</original>
    <variation>S</variation>
    <location>
        <position position="315"/>
    </location>
</feature>
<feature type="sequence conflict" description="In Ref. 1; AAC49456." ref="1">
    <original>G</original>
    <variation>R</variation>
    <location>
        <position position="358"/>
    </location>
</feature>
<feature type="sequence conflict" description="In Ref. 4; no nucleotide entry." evidence="13" ref="4">
    <original>VA</original>
    <variation>SG</variation>
    <location>
        <begin position="509"/>
        <end position="510"/>
    </location>
</feature>
<feature type="sequence conflict" description="In Ref. 1; AAC49457." evidence="13" ref="1">
    <original>T</original>
    <variation>L</variation>
    <location>
        <position position="515"/>
    </location>
</feature>
<feature type="helix" evidence="17">
    <location>
        <begin position="59"/>
        <end position="61"/>
    </location>
</feature>
<feature type="strand" evidence="17">
    <location>
        <begin position="73"/>
        <end position="77"/>
    </location>
</feature>
<feature type="helix" evidence="17">
    <location>
        <begin position="81"/>
        <end position="83"/>
    </location>
</feature>
<feature type="strand" evidence="17">
    <location>
        <begin position="86"/>
        <end position="94"/>
    </location>
</feature>
<feature type="helix" evidence="17">
    <location>
        <begin position="96"/>
        <end position="98"/>
    </location>
</feature>
<feature type="helix" evidence="17">
    <location>
        <begin position="109"/>
        <end position="117"/>
    </location>
</feature>
<feature type="turn" evidence="17">
    <location>
        <begin position="118"/>
        <end position="120"/>
    </location>
</feature>
<feature type="helix" evidence="17">
    <location>
        <begin position="121"/>
        <end position="128"/>
    </location>
</feature>
<feature type="strand" evidence="17">
    <location>
        <begin position="138"/>
        <end position="143"/>
    </location>
</feature>
<feature type="strand" evidence="17">
    <location>
        <begin position="146"/>
        <end position="156"/>
    </location>
</feature>
<feature type="helix" evidence="17">
    <location>
        <begin position="161"/>
        <end position="176"/>
    </location>
</feature>
<feature type="strand" evidence="17">
    <location>
        <begin position="180"/>
        <end position="187"/>
    </location>
</feature>
<feature type="helix" evidence="17">
    <location>
        <begin position="194"/>
        <end position="212"/>
    </location>
</feature>
<feature type="strand" evidence="17">
    <location>
        <begin position="229"/>
        <end position="235"/>
    </location>
</feature>
<feature type="helix" evidence="17">
    <location>
        <begin position="239"/>
        <end position="263"/>
    </location>
</feature>
<feature type="turn" evidence="17">
    <location>
        <begin position="266"/>
        <end position="268"/>
    </location>
</feature>
<feature type="helix" evidence="17">
    <location>
        <begin position="271"/>
        <end position="284"/>
    </location>
</feature>
<feature type="turn" evidence="17">
    <location>
        <begin position="285"/>
        <end position="288"/>
    </location>
</feature>
<feature type="strand" evidence="17">
    <location>
        <begin position="289"/>
        <end position="294"/>
    </location>
</feature>
<feature type="helix" evidence="17">
    <location>
        <begin position="296"/>
        <end position="301"/>
    </location>
</feature>
<feature type="helix" evidence="17">
    <location>
        <begin position="305"/>
        <end position="311"/>
    </location>
</feature>
<feature type="strand" evidence="17">
    <location>
        <begin position="320"/>
        <end position="326"/>
    </location>
</feature>
<feature type="strand" evidence="17">
    <location>
        <begin position="335"/>
        <end position="347"/>
    </location>
</feature>
<feature type="helix" evidence="16">
    <location>
        <begin position="361"/>
        <end position="368"/>
    </location>
</feature>
<feature type="helix" evidence="17">
    <location>
        <begin position="369"/>
        <end position="384"/>
    </location>
</feature>
<feature type="strand" evidence="17">
    <location>
        <begin position="387"/>
        <end position="400"/>
    </location>
</feature>
<feature type="strand" evidence="17">
    <location>
        <begin position="412"/>
        <end position="414"/>
    </location>
</feature>
<feature type="strand" evidence="17">
    <location>
        <begin position="420"/>
        <end position="422"/>
    </location>
</feature>
<feature type="helix" evidence="17">
    <location>
        <begin position="430"/>
        <end position="443"/>
    </location>
</feature>
<feature type="strand" evidence="17">
    <location>
        <begin position="447"/>
        <end position="453"/>
    </location>
</feature>
<feature type="helix" evidence="17">
    <location>
        <begin position="458"/>
        <end position="463"/>
    </location>
</feature>
<feature type="strand" evidence="17">
    <location>
        <begin position="468"/>
        <end position="471"/>
    </location>
</feature>
<feature type="helix" evidence="17">
    <location>
        <begin position="475"/>
        <end position="488"/>
    </location>
</feature>
<feature type="strand" evidence="17">
    <location>
        <begin position="492"/>
        <end position="494"/>
    </location>
</feature>
<feature type="helix" evidence="17">
    <location>
        <begin position="499"/>
        <end position="505"/>
    </location>
</feature>
<feature type="strand" evidence="17">
    <location>
        <begin position="508"/>
        <end position="514"/>
    </location>
</feature>
<feature type="helix" evidence="17">
    <location>
        <begin position="521"/>
        <end position="530"/>
    </location>
</feature>
<feature type="strand" evidence="17">
    <location>
        <begin position="537"/>
        <end position="543"/>
    </location>
</feature>
<feature type="turn" evidence="17">
    <location>
        <begin position="545"/>
        <end position="548"/>
    </location>
</feature>
<feature type="turn" evidence="17">
    <location>
        <begin position="551"/>
        <end position="554"/>
    </location>
</feature>
<feature type="helix" evidence="17">
    <location>
        <begin position="561"/>
        <end position="569"/>
    </location>
</feature>
<evidence type="ECO:0000250" key="1">
    <source>
        <dbReference type="UniProtKB" id="P28839"/>
    </source>
</evidence>
<evidence type="ECO:0000255" key="2"/>
<evidence type="ECO:0000269" key="3">
    <source>
    </source>
</evidence>
<evidence type="ECO:0000269" key="4">
    <source>
    </source>
</evidence>
<evidence type="ECO:0000269" key="5">
    <source>
    </source>
</evidence>
<evidence type="ECO:0000269" key="6">
    <source>
    </source>
</evidence>
<evidence type="ECO:0000269" key="7">
    <source>
    </source>
</evidence>
<evidence type="ECO:0000269" key="8">
    <source>
    </source>
</evidence>
<evidence type="ECO:0000269" key="9">
    <source>
    </source>
</evidence>
<evidence type="ECO:0000269" key="10">
    <source>
    </source>
</evidence>
<evidence type="ECO:0000269" key="11">
    <source>
    </source>
</evidence>
<evidence type="ECO:0000303" key="12">
    <source>
    </source>
</evidence>
<evidence type="ECO:0000305" key="13"/>
<evidence type="ECO:0000305" key="14">
    <source>
    </source>
</evidence>
<evidence type="ECO:0007744" key="15">
    <source>
        <dbReference type="PDB" id="4KSI"/>
    </source>
</evidence>
<evidence type="ECO:0007829" key="16">
    <source>
        <dbReference type="PDB" id="4KSI"/>
    </source>
</evidence>
<evidence type="ECO:0007829" key="17">
    <source>
        <dbReference type="PDB" id="5D8N"/>
    </source>
</evidence>